<dbReference type="EC" id="3.5.4.19" evidence="1"/>
<dbReference type="EMBL" id="CP000494">
    <property type="protein sequence ID" value="ABQ37175.1"/>
    <property type="molecule type" value="Genomic_DNA"/>
</dbReference>
<dbReference type="SMR" id="A5ELY1"/>
<dbReference type="STRING" id="288000.BBta_5182"/>
<dbReference type="KEGG" id="bbt:BBta_5182"/>
<dbReference type="eggNOG" id="COG0139">
    <property type="taxonomic scope" value="Bacteria"/>
</dbReference>
<dbReference type="HOGENOM" id="CLU_048577_5_0_5"/>
<dbReference type="UniPathway" id="UPA00031">
    <property type="reaction ID" value="UER00008"/>
</dbReference>
<dbReference type="Proteomes" id="UP000000246">
    <property type="component" value="Chromosome"/>
</dbReference>
<dbReference type="GO" id="GO:0005737">
    <property type="term" value="C:cytoplasm"/>
    <property type="evidence" value="ECO:0007669"/>
    <property type="project" value="UniProtKB-SubCell"/>
</dbReference>
<dbReference type="GO" id="GO:0000287">
    <property type="term" value="F:magnesium ion binding"/>
    <property type="evidence" value="ECO:0007669"/>
    <property type="project" value="UniProtKB-UniRule"/>
</dbReference>
<dbReference type="GO" id="GO:0004635">
    <property type="term" value="F:phosphoribosyl-AMP cyclohydrolase activity"/>
    <property type="evidence" value="ECO:0007669"/>
    <property type="project" value="UniProtKB-UniRule"/>
</dbReference>
<dbReference type="GO" id="GO:0008270">
    <property type="term" value="F:zinc ion binding"/>
    <property type="evidence" value="ECO:0007669"/>
    <property type="project" value="UniProtKB-UniRule"/>
</dbReference>
<dbReference type="GO" id="GO:0000105">
    <property type="term" value="P:L-histidine biosynthetic process"/>
    <property type="evidence" value="ECO:0007669"/>
    <property type="project" value="UniProtKB-UniRule"/>
</dbReference>
<dbReference type="FunFam" id="3.10.20.810:FF:000001">
    <property type="entry name" value="Histidine biosynthesis bifunctional protein HisIE"/>
    <property type="match status" value="1"/>
</dbReference>
<dbReference type="Gene3D" id="4.10.80.70">
    <property type="match status" value="1"/>
</dbReference>
<dbReference type="Gene3D" id="3.10.20.810">
    <property type="entry name" value="Phosphoribosyl-AMP cyclohydrolase"/>
    <property type="match status" value="1"/>
</dbReference>
<dbReference type="HAMAP" id="MF_01021">
    <property type="entry name" value="HisI"/>
    <property type="match status" value="1"/>
</dbReference>
<dbReference type="InterPro" id="IPR026660">
    <property type="entry name" value="PRA-CH"/>
</dbReference>
<dbReference type="InterPro" id="IPR002496">
    <property type="entry name" value="PRib_AMP_CycHydrolase_dom"/>
</dbReference>
<dbReference type="InterPro" id="IPR038019">
    <property type="entry name" value="PRib_AMP_CycHydrolase_sf"/>
</dbReference>
<dbReference type="NCBIfam" id="NF000768">
    <property type="entry name" value="PRK00051.1"/>
    <property type="match status" value="1"/>
</dbReference>
<dbReference type="PANTHER" id="PTHR42945">
    <property type="entry name" value="HISTIDINE BIOSYNTHESIS BIFUNCTIONAL PROTEIN"/>
    <property type="match status" value="1"/>
</dbReference>
<dbReference type="PANTHER" id="PTHR42945:SF1">
    <property type="entry name" value="HISTIDINE BIOSYNTHESIS BIFUNCTIONAL PROTEIN HIS7"/>
    <property type="match status" value="1"/>
</dbReference>
<dbReference type="Pfam" id="PF01502">
    <property type="entry name" value="PRA-CH"/>
    <property type="match status" value="1"/>
</dbReference>
<dbReference type="SUPFAM" id="SSF141734">
    <property type="entry name" value="HisI-like"/>
    <property type="match status" value="1"/>
</dbReference>
<name>HIS3_BRASB</name>
<sequence length="131" mass="14728">MAFLPKFDAGGLVTCVTTDAATGDVLMVAHMNDEALRRTVATGEAWYFSRSRNALWRKGESSGQTQRVIEMRTDCDQDAVWLRVEQTGAACHTGRRSCFYRRVERTEADGGARLVFVDADRLFDPDAVYRK</sequence>
<keyword id="KW-0028">Amino-acid biosynthesis</keyword>
<keyword id="KW-0963">Cytoplasm</keyword>
<keyword id="KW-0368">Histidine biosynthesis</keyword>
<keyword id="KW-0378">Hydrolase</keyword>
<keyword id="KW-0460">Magnesium</keyword>
<keyword id="KW-0479">Metal-binding</keyword>
<keyword id="KW-1185">Reference proteome</keyword>
<keyword id="KW-0862">Zinc</keyword>
<reference key="1">
    <citation type="journal article" date="2007" name="Science">
        <title>Legumes symbioses: absence of nod genes in photosynthetic bradyrhizobia.</title>
        <authorList>
            <person name="Giraud E."/>
            <person name="Moulin L."/>
            <person name="Vallenet D."/>
            <person name="Barbe V."/>
            <person name="Cytryn E."/>
            <person name="Avarre J.-C."/>
            <person name="Jaubert M."/>
            <person name="Simon D."/>
            <person name="Cartieaux F."/>
            <person name="Prin Y."/>
            <person name="Bena G."/>
            <person name="Hannibal L."/>
            <person name="Fardoux J."/>
            <person name="Kojadinovic M."/>
            <person name="Vuillet L."/>
            <person name="Lajus A."/>
            <person name="Cruveiller S."/>
            <person name="Rouy Z."/>
            <person name="Mangenot S."/>
            <person name="Segurens B."/>
            <person name="Dossat C."/>
            <person name="Franck W.L."/>
            <person name="Chang W.-S."/>
            <person name="Saunders E."/>
            <person name="Bruce D."/>
            <person name="Richardson P."/>
            <person name="Normand P."/>
            <person name="Dreyfus B."/>
            <person name="Pignol D."/>
            <person name="Stacey G."/>
            <person name="Emerich D."/>
            <person name="Vermeglio A."/>
            <person name="Medigue C."/>
            <person name="Sadowsky M."/>
        </authorList>
    </citation>
    <scope>NUCLEOTIDE SEQUENCE [LARGE SCALE GENOMIC DNA]</scope>
    <source>
        <strain>BTAi1 / ATCC BAA-1182</strain>
    </source>
</reference>
<protein>
    <recommendedName>
        <fullName evidence="1">Phosphoribosyl-AMP cyclohydrolase</fullName>
        <shortName evidence="1">PRA-CH</shortName>
        <ecNumber evidence="1">3.5.4.19</ecNumber>
    </recommendedName>
</protein>
<organism>
    <name type="scientific">Bradyrhizobium sp. (strain BTAi1 / ATCC BAA-1182)</name>
    <dbReference type="NCBI Taxonomy" id="288000"/>
    <lineage>
        <taxon>Bacteria</taxon>
        <taxon>Pseudomonadati</taxon>
        <taxon>Pseudomonadota</taxon>
        <taxon>Alphaproteobacteria</taxon>
        <taxon>Hyphomicrobiales</taxon>
        <taxon>Nitrobacteraceae</taxon>
        <taxon>Bradyrhizobium</taxon>
    </lineage>
</organism>
<gene>
    <name evidence="1" type="primary">hisI</name>
    <name type="ordered locus">BBta_5182</name>
</gene>
<feature type="chain" id="PRO_0000319683" description="Phosphoribosyl-AMP cyclohydrolase">
    <location>
        <begin position="1"/>
        <end position="131"/>
    </location>
</feature>
<feature type="binding site" evidence="1">
    <location>
        <position position="74"/>
    </location>
    <ligand>
        <name>Mg(2+)</name>
        <dbReference type="ChEBI" id="CHEBI:18420"/>
    </ligand>
</feature>
<feature type="binding site" evidence="1">
    <location>
        <position position="75"/>
    </location>
    <ligand>
        <name>Zn(2+)</name>
        <dbReference type="ChEBI" id="CHEBI:29105"/>
        <note>ligand shared between dimeric partners</note>
    </ligand>
</feature>
<feature type="binding site" evidence="1">
    <location>
        <position position="76"/>
    </location>
    <ligand>
        <name>Mg(2+)</name>
        <dbReference type="ChEBI" id="CHEBI:18420"/>
    </ligand>
</feature>
<feature type="binding site" evidence="1">
    <location>
        <position position="78"/>
    </location>
    <ligand>
        <name>Mg(2+)</name>
        <dbReference type="ChEBI" id="CHEBI:18420"/>
    </ligand>
</feature>
<feature type="binding site" evidence="1">
    <location>
        <position position="91"/>
    </location>
    <ligand>
        <name>Zn(2+)</name>
        <dbReference type="ChEBI" id="CHEBI:29105"/>
        <note>ligand shared between dimeric partners</note>
    </ligand>
</feature>
<feature type="binding site" evidence="1">
    <location>
        <position position="98"/>
    </location>
    <ligand>
        <name>Zn(2+)</name>
        <dbReference type="ChEBI" id="CHEBI:29105"/>
        <note>ligand shared between dimeric partners</note>
    </ligand>
</feature>
<proteinExistence type="inferred from homology"/>
<accession>A5ELY1</accession>
<evidence type="ECO:0000255" key="1">
    <source>
        <dbReference type="HAMAP-Rule" id="MF_01021"/>
    </source>
</evidence>
<comment type="function">
    <text evidence="1">Catalyzes the hydrolysis of the adenine ring of phosphoribosyl-AMP.</text>
</comment>
<comment type="catalytic activity">
    <reaction evidence="1">
        <text>1-(5-phospho-beta-D-ribosyl)-5'-AMP + H2O = 1-(5-phospho-beta-D-ribosyl)-5-[(5-phospho-beta-D-ribosylamino)methylideneamino]imidazole-4-carboxamide</text>
        <dbReference type="Rhea" id="RHEA:20049"/>
        <dbReference type="ChEBI" id="CHEBI:15377"/>
        <dbReference type="ChEBI" id="CHEBI:58435"/>
        <dbReference type="ChEBI" id="CHEBI:59457"/>
        <dbReference type="EC" id="3.5.4.19"/>
    </reaction>
</comment>
<comment type="cofactor">
    <cofactor evidence="1">
        <name>Mg(2+)</name>
        <dbReference type="ChEBI" id="CHEBI:18420"/>
    </cofactor>
    <text evidence="1">Binds 1 Mg(2+) ion per subunit.</text>
</comment>
<comment type="cofactor">
    <cofactor evidence="1">
        <name>Zn(2+)</name>
        <dbReference type="ChEBI" id="CHEBI:29105"/>
    </cofactor>
    <text evidence="1">Binds 1 zinc ion per subunit.</text>
</comment>
<comment type="pathway">
    <text evidence="1">Amino-acid biosynthesis; L-histidine biosynthesis; L-histidine from 5-phospho-alpha-D-ribose 1-diphosphate: step 3/9.</text>
</comment>
<comment type="subunit">
    <text evidence="1">Homodimer.</text>
</comment>
<comment type="subcellular location">
    <subcellularLocation>
        <location evidence="1">Cytoplasm</location>
    </subcellularLocation>
</comment>
<comment type="similarity">
    <text evidence="1">Belongs to the PRA-CH family.</text>
</comment>